<organism>
    <name type="scientific">Petunia hybrida</name>
    <name type="common">Petunia</name>
    <dbReference type="NCBI Taxonomy" id="4102"/>
    <lineage>
        <taxon>Eukaryota</taxon>
        <taxon>Viridiplantae</taxon>
        <taxon>Streptophyta</taxon>
        <taxon>Embryophyta</taxon>
        <taxon>Tracheophyta</taxon>
        <taxon>Spermatophyta</taxon>
        <taxon>Magnoliopsida</taxon>
        <taxon>eudicotyledons</taxon>
        <taxon>Gunneridae</taxon>
        <taxon>Pentapetalae</taxon>
        <taxon>asterids</taxon>
        <taxon>lamiids</taxon>
        <taxon>Solanales</taxon>
        <taxon>Solanaceae</taxon>
        <taxon>Petunioideae</taxon>
        <taxon>Petunia</taxon>
    </lineage>
</organism>
<evidence type="ECO:0000250" key="1">
    <source>
        <dbReference type="UniProtKB" id="D3GE74"/>
    </source>
</evidence>
<evidence type="ECO:0000255" key="2"/>
<evidence type="ECO:0000255" key="3">
    <source>
        <dbReference type="PROSITE-ProRule" id="PRU00434"/>
    </source>
</evidence>
<evidence type="ECO:0000255" key="4">
    <source>
        <dbReference type="PROSITE-ProRule" id="PRU00498"/>
    </source>
</evidence>
<evidence type="ECO:0000256" key="5">
    <source>
        <dbReference type="SAM" id="MobiDB-lite"/>
    </source>
</evidence>
<evidence type="ECO:0000269" key="6">
    <source>
    </source>
</evidence>
<evidence type="ECO:0000303" key="7">
    <source>
    </source>
</evidence>
<evidence type="ECO:0000305" key="8"/>
<accession>A0A0M4FLW6</accession>
<name>STR2_PETHY</name>
<sequence length="720" mass="80854">MRHANGRRGDTTIDIGKPVNFTGGLEFSNLTYTVIKKIKDSDGKWLNQEVDLLHQITGYAPKGCVTAVMGPSGAGKSTFLDGLAGRISSLRGRVSVDGMDMTPSFIKRTSAYIMQDDRLFPMLTVYETLLFAADLRLGPISMTDKRQRVEKLIEQLGLSSARNTYIGDEGTRGVSGGERRRVSIGVDIIHGPSLLFLDEPTSGLDSTSAHSVIDKVHAIARAGSTVILTIHQPSSRIQLLLDHLIILARGQLMYQGSPKDVSLHLGRMGRKVPKGESSIENLIDVIQEYDQSELGVEALAAFALTGMKPPPLGAHEMSIVPPSPAPSHREGRGHDRSNKRLHLKDQDFDHSLRSNWNTSKSWSASHSGVLQTLGFSPARHHRDHRNQNSVSSSLGDYAYTSENFRSIPTPHTQSSECTLNENDFMTPYAAANTNAYQYLGPKFANSFLSETWILMRRNFINIRRTPELFLSRLVVLTVMGIMMATMFMHPKKNLQGITNRLSFFIFTVCLFFFSSNDAVPAFIQERFIFVRETSHNKYRASSYTIAGLITYLPFLAVQAAVYAVIVWFALSLRGPFIYFLIVLYMSLLSTNSFVVFVSSVVPNYILGYAAVIAFTALFFLFCGYFLNSHDMPQYWKWMNYISTMTYPYEGLLMNQFQTSQTFGIDPLGRSITGNGILKSLNISQVESKKWEKVYIMLAWAIVYRILFYIVLRFFSKNQRT</sequence>
<dbReference type="EC" id="7.6.2.-"/>
<dbReference type="EMBL" id="KR612266">
    <property type="protein sequence ID" value="ALC79556.1"/>
    <property type="molecule type" value="mRNA"/>
</dbReference>
<dbReference type="SMR" id="A0A0M4FLW6"/>
<dbReference type="GlyCosmos" id="A0A0M4FLW6">
    <property type="glycosylation" value="1 site, No reported glycans"/>
</dbReference>
<dbReference type="GO" id="GO:0005886">
    <property type="term" value="C:plasma membrane"/>
    <property type="evidence" value="ECO:0007669"/>
    <property type="project" value="UniProtKB-SubCell"/>
</dbReference>
<dbReference type="GO" id="GO:0140359">
    <property type="term" value="F:ABC-type transporter activity"/>
    <property type="evidence" value="ECO:0007669"/>
    <property type="project" value="InterPro"/>
</dbReference>
<dbReference type="GO" id="GO:0005524">
    <property type="term" value="F:ATP binding"/>
    <property type="evidence" value="ECO:0007669"/>
    <property type="project" value="UniProtKB-KW"/>
</dbReference>
<dbReference type="GO" id="GO:0016887">
    <property type="term" value="F:ATP hydrolysis activity"/>
    <property type="evidence" value="ECO:0007669"/>
    <property type="project" value="InterPro"/>
</dbReference>
<dbReference type="GO" id="GO:0009610">
    <property type="term" value="P:response to symbiotic fungus"/>
    <property type="evidence" value="ECO:0000270"/>
    <property type="project" value="UniProtKB"/>
</dbReference>
<dbReference type="FunFam" id="3.40.50.300:FF:001556">
    <property type="entry name" value="ABC transporter G family member 6"/>
    <property type="match status" value="1"/>
</dbReference>
<dbReference type="Gene3D" id="3.40.50.300">
    <property type="entry name" value="P-loop containing nucleotide triphosphate hydrolases"/>
    <property type="match status" value="1"/>
</dbReference>
<dbReference type="InterPro" id="IPR003593">
    <property type="entry name" value="AAA+_ATPase"/>
</dbReference>
<dbReference type="InterPro" id="IPR013525">
    <property type="entry name" value="ABC2_TM"/>
</dbReference>
<dbReference type="InterPro" id="IPR003439">
    <property type="entry name" value="ABC_transporter-like_ATP-bd"/>
</dbReference>
<dbReference type="InterPro" id="IPR017871">
    <property type="entry name" value="ABC_transporter-like_CS"/>
</dbReference>
<dbReference type="InterPro" id="IPR050352">
    <property type="entry name" value="ABCG_transporters"/>
</dbReference>
<dbReference type="InterPro" id="IPR027417">
    <property type="entry name" value="P-loop_NTPase"/>
</dbReference>
<dbReference type="PANTHER" id="PTHR48041">
    <property type="entry name" value="ABC TRANSPORTER G FAMILY MEMBER 28"/>
    <property type="match status" value="1"/>
</dbReference>
<dbReference type="PANTHER" id="PTHR48041:SF20">
    <property type="entry name" value="ABC TRANSPORTER G FAMILY MEMBER STR2"/>
    <property type="match status" value="1"/>
</dbReference>
<dbReference type="Pfam" id="PF01061">
    <property type="entry name" value="ABC2_membrane"/>
    <property type="match status" value="1"/>
</dbReference>
<dbReference type="Pfam" id="PF00005">
    <property type="entry name" value="ABC_tran"/>
    <property type="match status" value="1"/>
</dbReference>
<dbReference type="SMART" id="SM00382">
    <property type="entry name" value="AAA"/>
    <property type="match status" value="1"/>
</dbReference>
<dbReference type="SUPFAM" id="SSF52540">
    <property type="entry name" value="P-loop containing nucleoside triphosphate hydrolases"/>
    <property type="match status" value="1"/>
</dbReference>
<dbReference type="PROSITE" id="PS00211">
    <property type="entry name" value="ABC_TRANSPORTER_1"/>
    <property type="match status" value="1"/>
</dbReference>
<dbReference type="PROSITE" id="PS50893">
    <property type="entry name" value="ABC_TRANSPORTER_2"/>
    <property type="match status" value="1"/>
</dbReference>
<keyword id="KW-0067">ATP-binding</keyword>
<keyword id="KW-1003">Cell membrane</keyword>
<keyword id="KW-0325">Glycoprotein</keyword>
<keyword id="KW-0378">Hydrolase</keyword>
<keyword id="KW-0472">Membrane</keyword>
<keyword id="KW-0547">Nucleotide-binding</keyword>
<keyword id="KW-1278">Translocase</keyword>
<keyword id="KW-0812">Transmembrane</keyword>
<keyword id="KW-1133">Transmembrane helix</keyword>
<keyword id="KW-0813">Transport</keyword>
<gene>
    <name evidence="7" type="primary">STR2</name>
</gene>
<reference key="1">
    <citation type="journal article" date="2015" name="Plant Physiol.">
        <title>The Petunia GRAS transcription factor ATA/RAM1 regulates symbiotic gene expression and fungal morphogenesis in arbuscular mycorrhiza.</title>
        <authorList>
            <person name="Rich M.K."/>
            <person name="Schorderet M."/>
            <person name="Bapaume L."/>
            <person name="Falquet L."/>
            <person name="Morel P."/>
            <person name="Vandenbussche M."/>
            <person name="Reinhardt D."/>
        </authorList>
    </citation>
    <scope>NUCLEOTIDE SEQUENCE [MRNA]</scope>
    <scope>INDUCTION BY RAM1 AND RHIZOPHAGUS IRREGULARIS</scope>
    <source>
        <strain>cv. W138</strain>
    </source>
</reference>
<feature type="chain" id="PRO_0000450021" description="ABC transporter G family member STR2">
    <location>
        <begin position="1"/>
        <end position="720"/>
    </location>
</feature>
<feature type="topological domain" description="Cytoplasmic" evidence="8">
    <location>
        <begin position="1"/>
        <end position="467"/>
    </location>
</feature>
<feature type="transmembrane region" description="Helical; Name=1" evidence="2">
    <location>
        <begin position="468"/>
        <end position="488"/>
    </location>
</feature>
<feature type="topological domain" description="Extracellular" evidence="8">
    <location>
        <begin position="489"/>
        <end position="502"/>
    </location>
</feature>
<feature type="transmembrane region" description="Helical; Name=2" evidence="2">
    <location>
        <begin position="503"/>
        <end position="523"/>
    </location>
</feature>
<feature type="topological domain" description="Cytoplasmic" evidence="8">
    <location>
        <begin position="524"/>
        <end position="547"/>
    </location>
</feature>
<feature type="transmembrane region" description="Helical; Name=3" evidence="2">
    <location>
        <begin position="548"/>
        <end position="568"/>
    </location>
</feature>
<feature type="topological domain" description="Extracellular" evidence="8">
    <location>
        <begin position="569"/>
        <end position="575"/>
    </location>
</feature>
<feature type="transmembrane region" description="Helical; Name=4" evidence="2">
    <location>
        <begin position="576"/>
        <end position="596"/>
    </location>
</feature>
<feature type="topological domain" description="Cytoplasmic" evidence="8">
    <location>
        <begin position="597"/>
        <end position="604"/>
    </location>
</feature>
<feature type="transmembrane region" description="Helical; Name=5" evidence="2">
    <location>
        <begin position="605"/>
        <end position="625"/>
    </location>
</feature>
<feature type="topological domain" description="Extracellular" evidence="8">
    <location>
        <begin position="626"/>
        <end position="693"/>
    </location>
</feature>
<feature type="transmembrane region" description="Helical; Name=6" evidence="2">
    <location>
        <begin position="694"/>
        <end position="714"/>
    </location>
</feature>
<feature type="topological domain" description="Cytoplasmic" evidence="8">
    <location>
        <begin position="715"/>
        <end position="720"/>
    </location>
</feature>
<feature type="domain" description="ABC transporter" evidence="3">
    <location>
        <begin position="25"/>
        <end position="274"/>
    </location>
</feature>
<feature type="region of interest" description="Disordered" evidence="5">
    <location>
        <begin position="313"/>
        <end position="346"/>
    </location>
</feature>
<feature type="compositionally biased region" description="Basic and acidic residues" evidence="5">
    <location>
        <begin position="327"/>
        <end position="346"/>
    </location>
</feature>
<feature type="binding site" evidence="3">
    <location>
        <begin position="70"/>
        <end position="77"/>
    </location>
    <ligand>
        <name>ATP</name>
        <dbReference type="ChEBI" id="CHEBI:30616"/>
    </ligand>
</feature>
<feature type="glycosylation site" description="N-linked (GlcNAc...) asparagine" evidence="4">
    <location>
        <position position="681"/>
    </location>
</feature>
<protein>
    <recommendedName>
        <fullName evidence="7">ABC transporter G family member STR2</fullName>
        <ecNumber>7.6.2.-</ecNumber>
    </recommendedName>
    <alternativeName>
        <fullName evidence="7">Protein STUNTED ARBUSCULE 2</fullName>
    </alternativeName>
</protein>
<proteinExistence type="evidence at transcript level"/>
<comment type="function">
    <text evidence="1">Together with STR, required for arbuscule development in arbuscular mycorrhizal (AM) symbiosis.</text>
</comment>
<comment type="subunit">
    <text evidence="1">Heterodimerizes with STR; the resulting transporter is located in the peri-arbuscular membrane.</text>
</comment>
<comment type="subcellular location">
    <subcellularLocation>
        <location evidence="1">Cell membrane</location>
        <topology evidence="2">Multi-pass membrane protein</topology>
    </subcellularLocation>
    <text evidence="1">Located in the peri-arbuscular membrane of arbuscular mycorrhiza (AM).</text>
</comment>
<comment type="induction">
    <text evidence="6">Regulated by RAM1 during arbuscular mycorrhiza (AM) formation after inoculation with Rhizophagus irregularis.</text>
</comment>
<comment type="similarity">
    <text evidence="8">Belongs to the ABC transporter superfamily. ABCG family. Stunted arbuscule (STR) subfamily.</text>
</comment>